<feature type="chain" id="PRO_1000048550" description="DNA replication and repair protein RecF">
    <location>
        <begin position="1"/>
        <end position="420"/>
    </location>
</feature>
<feature type="region of interest" description="Disordered" evidence="2">
    <location>
        <begin position="175"/>
        <end position="214"/>
    </location>
</feature>
<feature type="binding site" evidence="1">
    <location>
        <begin position="30"/>
        <end position="37"/>
    </location>
    <ligand>
        <name>ATP</name>
        <dbReference type="ChEBI" id="CHEBI:30616"/>
    </ligand>
</feature>
<keyword id="KW-0067">ATP-binding</keyword>
<keyword id="KW-0963">Cytoplasm</keyword>
<keyword id="KW-0227">DNA damage</keyword>
<keyword id="KW-0234">DNA repair</keyword>
<keyword id="KW-0235">DNA replication</keyword>
<keyword id="KW-0238">DNA-binding</keyword>
<keyword id="KW-0547">Nucleotide-binding</keyword>
<keyword id="KW-1185">Reference proteome</keyword>
<keyword id="KW-0742">SOS response</keyword>
<accession>A1SCL9</accession>
<organism>
    <name type="scientific">Nocardioides sp. (strain ATCC BAA-499 / JS614)</name>
    <dbReference type="NCBI Taxonomy" id="196162"/>
    <lineage>
        <taxon>Bacteria</taxon>
        <taxon>Bacillati</taxon>
        <taxon>Actinomycetota</taxon>
        <taxon>Actinomycetes</taxon>
        <taxon>Propionibacteriales</taxon>
        <taxon>Nocardioidaceae</taxon>
        <taxon>Nocardioides</taxon>
    </lineage>
</organism>
<protein>
    <recommendedName>
        <fullName evidence="1">DNA replication and repair protein RecF</fullName>
    </recommendedName>
</protein>
<gene>
    <name evidence="1" type="primary">recF</name>
    <name type="ordered locus">Noca_0004</name>
</gene>
<reference key="1">
    <citation type="submission" date="2006-12" db="EMBL/GenBank/DDBJ databases">
        <title>Complete sequence of chromosome 1 of Nocardioides sp. JS614.</title>
        <authorList>
            <person name="Copeland A."/>
            <person name="Lucas S."/>
            <person name="Lapidus A."/>
            <person name="Barry K."/>
            <person name="Detter J.C."/>
            <person name="Glavina del Rio T."/>
            <person name="Hammon N."/>
            <person name="Israni S."/>
            <person name="Dalin E."/>
            <person name="Tice H."/>
            <person name="Pitluck S."/>
            <person name="Thompson L.S."/>
            <person name="Brettin T."/>
            <person name="Bruce D."/>
            <person name="Han C."/>
            <person name="Tapia R."/>
            <person name="Schmutz J."/>
            <person name="Larimer F."/>
            <person name="Land M."/>
            <person name="Hauser L."/>
            <person name="Kyrpides N."/>
            <person name="Kim E."/>
            <person name="Mattes T."/>
            <person name="Gossett J."/>
            <person name="Richardson P."/>
        </authorList>
    </citation>
    <scope>NUCLEOTIDE SEQUENCE [LARGE SCALE GENOMIC DNA]</scope>
    <source>
        <strain>ATCC BAA-499 / JS614</strain>
    </source>
</reference>
<proteinExistence type="inferred from homology"/>
<comment type="function">
    <text evidence="1">The RecF protein is involved in DNA metabolism; it is required for DNA replication and normal SOS inducibility. RecF binds preferentially to single-stranded, linear DNA. It also seems to bind ATP.</text>
</comment>
<comment type="subcellular location">
    <subcellularLocation>
        <location evidence="1">Cytoplasm</location>
    </subcellularLocation>
</comment>
<comment type="similarity">
    <text evidence="1">Belongs to the RecF family.</text>
</comment>
<evidence type="ECO:0000255" key="1">
    <source>
        <dbReference type="HAMAP-Rule" id="MF_00365"/>
    </source>
</evidence>
<evidence type="ECO:0000256" key="2">
    <source>
        <dbReference type="SAM" id="MobiDB-lite"/>
    </source>
</evidence>
<name>RECF_NOCSJ</name>
<sequence>MYVAHLSLHDFRSYATAEVELSPGVTAFIGRNGQGKTNLVEAIDYLSRLSSHRVASDAPLVRAGADQAVVRAAVVRDGRTAVLEVELNPGRSNRARVNRSPLPRARDLVGLVRTVVFSPEDLTLVKGDPADRRRFLDDLLVLRVPRLAGVRADYDRVLRQRNTLLKTARKGGFARKGGFARKGGFAPLGPPEGRPEGPPEGRTGGSATSGPPSRSVALDTLAVWDAHLARTGAELLAERLALVEALRPYVGKAYETVARGATRDDAEIDYKPSFDLEGRTGRDDLVEALLAEVERRRGDELDRGVSLVGPHRDELLLTLGHGSPDSRLPVKGYASHGESWSFALALRLAAYDLLRADGDDPILILDDVFAELDTERRAQLADLVAGAEQVLVTAAVAADVPAGLAGARFAVGNGEVLREQ</sequence>
<dbReference type="EMBL" id="CP000509">
    <property type="protein sequence ID" value="ABL79554.1"/>
    <property type="molecule type" value="Genomic_DNA"/>
</dbReference>
<dbReference type="RefSeq" id="WP_011753505.1">
    <property type="nucleotide sequence ID" value="NC_008699.1"/>
</dbReference>
<dbReference type="SMR" id="A1SCL9"/>
<dbReference type="STRING" id="196162.Noca_0004"/>
<dbReference type="KEGG" id="nca:Noca_0004"/>
<dbReference type="eggNOG" id="COG1195">
    <property type="taxonomic scope" value="Bacteria"/>
</dbReference>
<dbReference type="HOGENOM" id="CLU_040267_1_1_11"/>
<dbReference type="OrthoDB" id="9803889at2"/>
<dbReference type="Proteomes" id="UP000000640">
    <property type="component" value="Chromosome"/>
</dbReference>
<dbReference type="GO" id="GO:0005737">
    <property type="term" value="C:cytoplasm"/>
    <property type="evidence" value="ECO:0007669"/>
    <property type="project" value="UniProtKB-SubCell"/>
</dbReference>
<dbReference type="GO" id="GO:0005524">
    <property type="term" value="F:ATP binding"/>
    <property type="evidence" value="ECO:0007669"/>
    <property type="project" value="UniProtKB-UniRule"/>
</dbReference>
<dbReference type="GO" id="GO:0003697">
    <property type="term" value="F:single-stranded DNA binding"/>
    <property type="evidence" value="ECO:0007669"/>
    <property type="project" value="UniProtKB-UniRule"/>
</dbReference>
<dbReference type="GO" id="GO:0006260">
    <property type="term" value="P:DNA replication"/>
    <property type="evidence" value="ECO:0007669"/>
    <property type="project" value="UniProtKB-UniRule"/>
</dbReference>
<dbReference type="GO" id="GO:0000731">
    <property type="term" value="P:DNA synthesis involved in DNA repair"/>
    <property type="evidence" value="ECO:0007669"/>
    <property type="project" value="TreeGrafter"/>
</dbReference>
<dbReference type="GO" id="GO:0006302">
    <property type="term" value="P:double-strand break repair"/>
    <property type="evidence" value="ECO:0007669"/>
    <property type="project" value="TreeGrafter"/>
</dbReference>
<dbReference type="GO" id="GO:0009432">
    <property type="term" value="P:SOS response"/>
    <property type="evidence" value="ECO:0007669"/>
    <property type="project" value="UniProtKB-UniRule"/>
</dbReference>
<dbReference type="Gene3D" id="3.40.50.300">
    <property type="entry name" value="P-loop containing nucleotide triphosphate hydrolases"/>
    <property type="match status" value="1"/>
</dbReference>
<dbReference type="Gene3D" id="1.20.1050.90">
    <property type="entry name" value="RecF/RecN/SMC, N-terminal domain"/>
    <property type="match status" value="1"/>
</dbReference>
<dbReference type="HAMAP" id="MF_00365">
    <property type="entry name" value="RecF"/>
    <property type="match status" value="1"/>
</dbReference>
<dbReference type="InterPro" id="IPR001238">
    <property type="entry name" value="DNA-binding_RecF"/>
</dbReference>
<dbReference type="InterPro" id="IPR018078">
    <property type="entry name" value="DNA-binding_RecF_CS"/>
</dbReference>
<dbReference type="InterPro" id="IPR027417">
    <property type="entry name" value="P-loop_NTPase"/>
</dbReference>
<dbReference type="InterPro" id="IPR003395">
    <property type="entry name" value="RecF/RecN/SMC_N"/>
</dbReference>
<dbReference type="InterPro" id="IPR042174">
    <property type="entry name" value="RecF_2"/>
</dbReference>
<dbReference type="PANTHER" id="PTHR32182">
    <property type="entry name" value="DNA REPLICATION AND REPAIR PROTEIN RECF"/>
    <property type="match status" value="1"/>
</dbReference>
<dbReference type="PANTHER" id="PTHR32182:SF0">
    <property type="entry name" value="DNA REPLICATION AND REPAIR PROTEIN RECF"/>
    <property type="match status" value="1"/>
</dbReference>
<dbReference type="Pfam" id="PF02463">
    <property type="entry name" value="SMC_N"/>
    <property type="match status" value="1"/>
</dbReference>
<dbReference type="SUPFAM" id="SSF52540">
    <property type="entry name" value="P-loop containing nucleoside triphosphate hydrolases"/>
    <property type="match status" value="1"/>
</dbReference>
<dbReference type="PROSITE" id="PS00617">
    <property type="entry name" value="RECF_1"/>
    <property type="match status" value="1"/>
</dbReference>
<dbReference type="PROSITE" id="PS00618">
    <property type="entry name" value="RECF_2"/>
    <property type="match status" value="1"/>
</dbReference>